<accession>Q5HAT0</accession>
<accession>Q5FD66</accession>
<gene>
    <name evidence="1" type="primary">rpmC</name>
    <name type="ordered locus">Erum5991</name>
    <name type="ordered locus">ERWE_CDS_06300</name>
</gene>
<dbReference type="EMBL" id="CR767821">
    <property type="protein sequence ID" value="CAH58331.1"/>
    <property type="molecule type" value="Genomic_DNA"/>
</dbReference>
<dbReference type="EMBL" id="CR925678">
    <property type="protein sequence ID" value="CAI27124.1"/>
    <property type="molecule type" value="Genomic_DNA"/>
</dbReference>
<dbReference type="RefSeq" id="WP_011155281.1">
    <property type="nucleotide sequence ID" value="NC_005295.2"/>
</dbReference>
<dbReference type="SMR" id="Q5HAT0"/>
<dbReference type="GeneID" id="33057733"/>
<dbReference type="KEGG" id="eru:Erum5991"/>
<dbReference type="KEGG" id="erw:ERWE_CDS_06300"/>
<dbReference type="eggNOG" id="COG0255">
    <property type="taxonomic scope" value="Bacteria"/>
</dbReference>
<dbReference type="HOGENOM" id="CLU_158491_4_0_5"/>
<dbReference type="Proteomes" id="UP000001021">
    <property type="component" value="Chromosome"/>
</dbReference>
<dbReference type="GO" id="GO:1990904">
    <property type="term" value="C:ribonucleoprotein complex"/>
    <property type="evidence" value="ECO:0007669"/>
    <property type="project" value="UniProtKB-KW"/>
</dbReference>
<dbReference type="GO" id="GO:0005840">
    <property type="term" value="C:ribosome"/>
    <property type="evidence" value="ECO:0007669"/>
    <property type="project" value="UniProtKB-KW"/>
</dbReference>
<dbReference type="GO" id="GO:0003735">
    <property type="term" value="F:structural constituent of ribosome"/>
    <property type="evidence" value="ECO:0007669"/>
    <property type="project" value="InterPro"/>
</dbReference>
<dbReference type="GO" id="GO:0006412">
    <property type="term" value="P:translation"/>
    <property type="evidence" value="ECO:0007669"/>
    <property type="project" value="UniProtKB-UniRule"/>
</dbReference>
<dbReference type="CDD" id="cd00427">
    <property type="entry name" value="Ribosomal_L29_HIP"/>
    <property type="match status" value="1"/>
</dbReference>
<dbReference type="Gene3D" id="1.10.287.310">
    <property type="match status" value="1"/>
</dbReference>
<dbReference type="HAMAP" id="MF_00374">
    <property type="entry name" value="Ribosomal_uL29"/>
    <property type="match status" value="1"/>
</dbReference>
<dbReference type="InterPro" id="IPR001854">
    <property type="entry name" value="Ribosomal_uL29"/>
</dbReference>
<dbReference type="InterPro" id="IPR036049">
    <property type="entry name" value="Ribosomal_uL29_sf"/>
</dbReference>
<dbReference type="NCBIfam" id="TIGR00012">
    <property type="entry name" value="L29"/>
    <property type="match status" value="1"/>
</dbReference>
<dbReference type="Pfam" id="PF00831">
    <property type="entry name" value="Ribosomal_L29"/>
    <property type="match status" value="1"/>
</dbReference>
<dbReference type="SUPFAM" id="SSF46561">
    <property type="entry name" value="Ribosomal protein L29 (L29p)"/>
    <property type="match status" value="1"/>
</dbReference>
<comment type="similarity">
    <text evidence="1">Belongs to the universal ribosomal protein uL29 family.</text>
</comment>
<reference key="1">
    <citation type="journal article" date="2005" name="Proc. Natl. Acad. Sci. U.S.A.">
        <title>The genome of the heartwater agent Ehrlichia ruminantium contains multiple tandem repeats of actively variable copy number.</title>
        <authorList>
            <person name="Collins N.E."/>
            <person name="Liebenberg J."/>
            <person name="de Villiers E.P."/>
            <person name="Brayton K.A."/>
            <person name="Louw E."/>
            <person name="Pretorius A."/>
            <person name="Faber F.E."/>
            <person name="van Heerden H."/>
            <person name="Josemans A."/>
            <person name="van Kleef M."/>
            <person name="Steyn H.C."/>
            <person name="van Strijp M.F."/>
            <person name="Zweygarth E."/>
            <person name="Jongejan F."/>
            <person name="Maillard J.C."/>
            <person name="Berthier D."/>
            <person name="Botha M."/>
            <person name="Joubert F."/>
            <person name="Corton C.H."/>
            <person name="Thomson N.R."/>
            <person name="Allsopp M.T."/>
            <person name="Allsopp B.A."/>
        </authorList>
    </citation>
    <scope>NUCLEOTIDE SEQUENCE [LARGE SCALE GENOMIC DNA]</scope>
    <source>
        <strain>Welgevonden</strain>
    </source>
</reference>
<reference key="2">
    <citation type="journal article" date="2006" name="J. Bacteriol.">
        <title>Comparative genomic analysis of three strains of Ehrlichia ruminantium reveals an active process of genome size plasticity.</title>
        <authorList>
            <person name="Frutos R."/>
            <person name="Viari A."/>
            <person name="Ferraz C."/>
            <person name="Morgat A."/>
            <person name="Eychenie S."/>
            <person name="Kandassamy Y."/>
            <person name="Chantal I."/>
            <person name="Bensaid A."/>
            <person name="Coissac E."/>
            <person name="Vachiery N."/>
            <person name="Demaille J."/>
            <person name="Martinez D."/>
        </authorList>
    </citation>
    <scope>NUCLEOTIDE SEQUENCE [LARGE SCALE GENOMIC DNA]</scope>
    <source>
        <strain>Welgevonden</strain>
    </source>
</reference>
<name>RL29_EHRRW</name>
<keyword id="KW-0687">Ribonucleoprotein</keyword>
<keyword id="KW-0689">Ribosomal protein</keyword>
<proteinExistence type="inferred from homology"/>
<protein>
    <recommendedName>
        <fullName evidence="1">Large ribosomal subunit protein uL29</fullName>
    </recommendedName>
    <alternativeName>
        <fullName evidence="2">50S ribosomal protein L29</fullName>
    </alternativeName>
</protein>
<sequence length="67" mass="7917">MDIIDIRSKTNDELHELLFNLRKELIDVILTKKLDKSHNHFYGSNIKKDIARILTVLSERKNEVKNV</sequence>
<feature type="chain" id="PRO_0000130388" description="Large ribosomal subunit protein uL29">
    <location>
        <begin position="1"/>
        <end position="67"/>
    </location>
</feature>
<organism>
    <name type="scientific">Ehrlichia ruminantium (strain Welgevonden)</name>
    <dbReference type="NCBI Taxonomy" id="254945"/>
    <lineage>
        <taxon>Bacteria</taxon>
        <taxon>Pseudomonadati</taxon>
        <taxon>Pseudomonadota</taxon>
        <taxon>Alphaproteobacteria</taxon>
        <taxon>Rickettsiales</taxon>
        <taxon>Anaplasmataceae</taxon>
        <taxon>Ehrlichia</taxon>
    </lineage>
</organism>
<evidence type="ECO:0000255" key="1">
    <source>
        <dbReference type="HAMAP-Rule" id="MF_00374"/>
    </source>
</evidence>
<evidence type="ECO:0000305" key="2"/>